<gene>
    <name evidence="5" type="ordered locus">APE_2128</name>
</gene>
<sequence length="318" mass="34937">MASRGVASYRTEVWSDWCPGCGDFGILAAMQKAFAELNLDPAQTVVVSGIGCSSKTPHFINVNGVHTIHGRGIAFATGIKLANPQLKVIVNGGDGDLLGIGVAHFVALGRRNLDVTVLIHNNKVYGLTKGQASPTLRRGEKVKSLPVPNLQDAVNPIALAIASGYTFVARAYSLWVDHLKEILKAAINHKGSAVIDVLQPCVTYNDIYTAEFYKDRLYKLEDDPSWDPIVRDPSEDEEKKAAAIKKAEEWGTRIPVGVFYVNPLKDTYEERLAQRNPSYSIDNPPALQPISREDGSPIVGPDEFRKIFKRFIVNVKKL</sequence>
<protein>
    <recommendedName>
        <fullName evidence="4">2-oxoacid:ferredoxin oxidoreductase 1, subunit beta</fullName>
        <shortName evidence="4">OFOR1</shortName>
        <ecNumber evidence="3">1.2.7.11</ecNumber>
    </recommendedName>
</protein>
<feature type="chain" id="PRO_0000445536" description="2-oxoacid:ferredoxin oxidoreductase 1, subunit beta">
    <location>
        <begin position="1"/>
        <end position="318"/>
    </location>
</feature>
<feature type="binding site" evidence="1">
    <location>
        <position position="18"/>
    </location>
    <ligand>
        <name>[4Fe-4S] cluster</name>
        <dbReference type="ChEBI" id="CHEBI:49883"/>
    </ligand>
</feature>
<feature type="binding site" evidence="1">
    <location>
        <position position="21"/>
    </location>
    <ligand>
        <name>[4Fe-4S] cluster</name>
        <dbReference type="ChEBI" id="CHEBI:49883"/>
    </ligand>
</feature>
<feature type="binding site" evidence="1">
    <location>
        <begin position="50"/>
        <end position="53"/>
    </location>
    <ligand>
        <name>thiamine diphosphate</name>
        <dbReference type="ChEBI" id="CHEBI:58937"/>
    </ligand>
</feature>
<feature type="binding site" evidence="1">
    <location>
        <position position="52"/>
    </location>
    <ligand>
        <name>[4Fe-4S] cluster</name>
        <dbReference type="ChEBI" id="CHEBI:49883"/>
    </ligand>
</feature>
<feature type="binding site" evidence="1">
    <location>
        <position position="69"/>
    </location>
    <ligand>
        <name>thiamine diphosphate</name>
        <dbReference type="ChEBI" id="CHEBI:58937"/>
    </ligand>
</feature>
<feature type="binding site" evidence="1">
    <location>
        <position position="94"/>
    </location>
    <ligand>
        <name>Mg(2+)</name>
        <dbReference type="ChEBI" id="CHEBI:18420"/>
    </ligand>
</feature>
<feature type="binding site" evidence="1">
    <location>
        <begin position="95"/>
        <end position="96"/>
    </location>
    <ligand>
        <name>thiamine diphosphate</name>
        <dbReference type="ChEBI" id="CHEBI:58937"/>
    </ligand>
</feature>
<feature type="binding site" evidence="1">
    <location>
        <position position="122"/>
    </location>
    <ligand>
        <name>Mg(2+)</name>
        <dbReference type="ChEBI" id="CHEBI:18420"/>
    </ligand>
</feature>
<feature type="binding site" evidence="1">
    <location>
        <position position="124"/>
    </location>
    <ligand>
        <name>Mg(2+)</name>
        <dbReference type="ChEBI" id="CHEBI:18420"/>
    </ligand>
</feature>
<feature type="binding site" evidence="1">
    <location>
        <begin position="126"/>
        <end position="127"/>
    </location>
    <ligand>
        <name>thiamine diphosphate</name>
        <dbReference type="ChEBI" id="CHEBI:58937"/>
    </ligand>
</feature>
<feature type="binding site" evidence="1">
    <location>
        <position position="201"/>
    </location>
    <ligand>
        <name>[4Fe-4S] cluster</name>
        <dbReference type="ChEBI" id="CHEBI:49883"/>
    </ligand>
</feature>
<feature type="site" description="Plays an important role in the binding of CoA" evidence="2">
    <location>
        <position position="129"/>
    </location>
</feature>
<keyword id="KW-0408">Iron</keyword>
<keyword id="KW-0411">Iron-sulfur</keyword>
<keyword id="KW-0460">Magnesium</keyword>
<keyword id="KW-0479">Metal-binding</keyword>
<keyword id="KW-0560">Oxidoreductase</keyword>
<keyword id="KW-1185">Reference proteome</keyword>
<keyword id="KW-0786">Thiamine pyrophosphate</keyword>
<dbReference type="EC" id="1.2.7.11" evidence="3"/>
<dbReference type="EMBL" id="BA000002">
    <property type="protein sequence ID" value="BAA81139.1"/>
    <property type="molecule type" value="Genomic_DNA"/>
</dbReference>
<dbReference type="PIR" id="C72519">
    <property type="entry name" value="C72519"/>
</dbReference>
<dbReference type="SMR" id="Q9YA11"/>
<dbReference type="STRING" id="272557.APE_2128"/>
<dbReference type="EnsemblBacteria" id="BAA81139">
    <property type="protein sequence ID" value="BAA81139"/>
    <property type="gene ID" value="APE_2128"/>
</dbReference>
<dbReference type="KEGG" id="ape:APE_2128"/>
<dbReference type="PATRIC" id="fig|272557.25.peg.1417"/>
<dbReference type="eggNOG" id="arCOG01599">
    <property type="taxonomic scope" value="Archaea"/>
</dbReference>
<dbReference type="Proteomes" id="UP000002518">
    <property type="component" value="Chromosome"/>
</dbReference>
<dbReference type="GO" id="GO:0018491">
    <property type="term" value="F:2-oxobutyrate synthase activity"/>
    <property type="evidence" value="ECO:0000314"/>
    <property type="project" value="UniProtKB"/>
</dbReference>
<dbReference type="GO" id="GO:0051539">
    <property type="term" value="F:4 iron, 4 sulfur cluster binding"/>
    <property type="evidence" value="ECO:0000250"/>
    <property type="project" value="UniProtKB"/>
</dbReference>
<dbReference type="GO" id="GO:0000287">
    <property type="term" value="F:magnesium ion binding"/>
    <property type="evidence" value="ECO:0000250"/>
    <property type="project" value="UniProtKB"/>
</dbReference>
<dbReference type="GO" id="GO:0019164">
    <property type="term" value="F:pyruvate synthase activity"/>
    <property type="evidence" value="ECO:0000314"/>
    <property type="project" value="UniProtKB"/>
</dbReference>
<dbReference type="GO" id="GO:0030976">
    <property type="term" value="F:thiamine pyrophosphate binding"/>
    <property type="evidence" value="ECO:0000250"/>
    <property type="project" value="UniProtKB"/>
</dbReference>
<dbReference type="CDD" id="cd03375">
    <property type="entry name" value="TPP_OGFOR"/>
    <property type="match status" value="1"/>
</dbReference>
<dbReference type="FunFam" id="3.40.50.970:FF:000049">
    <property type="entry name" value="2-oxoglutarate ferredoxin oxidoreductase subunit beta"/>
    <property type="match status" value="1"/>
</dbReference>
<dbReference type="Gene3D" id="3.40.50.970">
    <property type="match status" value="1"/>
</dbReference>
<dbReference type="InterPro" id="IPR053399">
    <property type="entry name" value="2-oxoacid:Fd_oxidored_beta"/>
</dbReference>
<dbReference type="InterPro" id="IPR051457">
    <property type="entry name" value="2-oxoacid:Fd_oxidoreductase"/>
</dbReference>
<dbReference type="InterPro" id="IPR011896">
    <property type="entry name" value="OFOB"/>
</dbReference>
<dbReference type="InterPro" id="IPR032686">
    <property type="entry name" value="PFO_beta_C"/>
</dbReference>
<dbReference type="InterPro" id="IPR029061">
    <property type="entry name" value="THDP-binding"/>
</dbReference>
<dbReference type="InterPro" id="IPR011766">
    <property type="entry name" value="TPP_enzyme_TPP-bd"/>
</dbReference>
<dbReference type="NCBIfam" id="NF041171">
    <property type="entry name" value="Oxoac_fdxbeta_Archa"/>
    <property type="match status" value="1"/>
</dbReference>
<dbReference type="NCBIfam" id="TIGR02177">
    <property type="entry name" value="PorB_KorB"/>
    <property type="match status" value="1"/>
</dbReference>
<dbReference type="PANTHER" id="PTHR48084">
    <property type="entry name" value="2-OXOGLUTARATE OXIDOREDUCTASE SUBUNIT KORB-RELATED"/>
    <property type="match status" value="1"/>
</dbReference>
<dbReference type="PANTHER" id="PTHR48084:SF2">
    <property type="entry name" value="PYRUVATE FERREDOXIN_FLAVODOXIN OXIDOREDUCTASE, BETA SUBUNIT"/>
    <property type="match status" value="1"/>
</dbReference>
<dbReference type="Pfam" id="PF12367">
    <property type="entry name" value="PFO_beta_C"/>
    <property type="match status" value="1"/>
</dbReference>
<dbReference type="Pfam" id="PF02775">
    <property type="entry name" value="TPP_enzyme_C"/>
    <property type="match status" value="1"/>
</dbReference>
<dbReference type="SUPFAM" id="SSF52518">
    <property type="entry name" value="Thiamin diphosphate-binding fold (THDP-binding)"/>
    <property type="match status" value="1"/>
</dbReference>
<name>OFOB1_AERPE</name>
<accession>Q9YA11</accession>
<proteinExistence type="evidence at protein level"/>
<evidence type="ECO:0000250" key="1">
    <source>
        <dbReference type="UniProtKB" id="Q96XT4"/>
    </source>
</evidence>
<evidence type="ECO:0000250" key="2">
    <source>
        <dbReference type="UniProtKB" id="Q96Y68"/>
    </source>
</evidence>
<evidence type="ECO:0000269" key="3">
    <source>
    </source>
</evidence>
<evidence type="ECO:0000303" key="4">
    <source>
    </source>
</evidence>
<evidence type="ECO:0000312" key="5">
    <source>
        <dbReference type="EMBL" id="BAA81139.1"/>
    </source>
</evidence>
<evidence type="ECO:0000312" key="6">
    <source>
        <dbReference type="Proteomes" id="UP000002518"/>
    </source>
</evidence>
<comment type="function">
    <text evidence="3">Catalyzes the coenzyme A-dependent oxidative decarboxylation of different 2-oxoacids such as pyruvate, 2-oxobutyrate and glyoxylate to form their CoA derivatives.</text>
</comment>
<comment type="catalytic activity">
    <reaction evidence="3">
        <text>a 2-oxocarboxylate + 2 oxidized [2Fe-2S]-[ferredoxin] + CoA = an acyl-CoA + 2 reduced [2Fe-2S]-[ferredoxin] + CO2 + H(+)</text>
        <dbReference type="Rhea" id="RHEA:42316"/>
        <dbReference type="Rhea" id="RHEA-COMP:10000"/>
        <dbReference type="Rhea" id="RHEA-COMP:10001"/>
        <dbReference type="ChEBI" id="CHEBI:15378"/>
        <dbReference type="ChEBI" id="CHEBI:16526"/>
        <dbReference type="ChEBI" id="CHEBI:33737"/>
        <dbReference type="ChEBI" id="CHEBI:33738"/>
        <dbReference type="ChEBI" id="CHEBI:35179"/>
        <dbReference type="ChEBI" id="CHEBI:57287"/>
        <dbReference type="ChEBI" id="CHEBI:58342"/>
        <dbReference type="EC" id="1.2.7.11"/>
    </reaction>
</comment>
<comment type="cofactor">
    <cofactor evidence="1">
        <name>[4Fe-4S] cluster</name>
        <dbReference type="ChEBI" id="CHEBI:49883"/>
    </cofactor>
    <text evidence="1">Binds 1 [4Fe-4S] cluster per subunit.</text>
</comment>
<comment type="cofactor">
    <cofactor evidence="1">
        <name>thiamine diphosphate</name>
        <dbReference type="ChEBI" id="CHEBI:58937"/>
    </cofactor>
    <text evidence="1">Binds 1 thiamine pyrophosphate per subunit.</text>
</comment>
<comment type="cofactor">
    <cofactor evidence="1">
        <name>Mg(2+)</name>
        <dbReference type="ChEBI" id="CHEBI:18420"/>
    </cofactor>
    <text evidence="1">Binds 1 Mg(2+) per subunit.</text>
</comment>
<comment type="biophysicochemical properties">
    <kinetics>
        <KM evidence="3">240 uM for pyruvate (at 80 degrees Celsius)</KM>
        <Vmax evidence="3">10.1 umol/min/mg enzyme with pyruvate as substrate (at 80 degrees Celsius)</Vmax>
    </kinetics>
    <phDependence>
        <text evidence="3">Optimum pH is 8.</text>
    </phDependence>
    <temperatureDependence>
        <text evidence="3">Optimum temperature is 105 degrees Celsius.</text>
    </temperatureDependence>
</comment>
<comment type="subunit">
    <text evidence="3">Heterodimer composed of an alpha and a beta subunit.</text>
</comment>
<organism>
    <name type="scientific">Aeropyrum pernix (strain ATCC 700893 / DSM 11879 / JCM 9820 / NBRC 100138 / K1)</name>
    <dbReference type="NCBI Taxonomy" id="272557"/>
    <lineage>
        <taxon>Archaea</taxon>
        <taxon>Thermoproteota</taxon>
        <taxon>Thermoprotei</taxon>
        <taxon>Desulfurococcales</taxon>
        <taxon>Desulfurococcaceae</taxon>
        <taxon>Aeropyrum</taxon>
    </lineage>
</organism>
<reference key="1">
    <citation type="journal article" date="1999" name="DNA Res.">
        <title>Complete genome sequence of an aerobic hyper-thermophilic crenarchaeon, Aeropyrum pernix K1.</title>
        <authorList>
            <person name="Kawarabayasi Y."/>
            <person name="Hino Y."/>
            <person name="Horikawa H."/>
            <person name="Yamazaki S."/>
            <person name="Haikawa Y."/>
            <person name="Jin-no K."/>
            <person name="Takahashi M."/>
            <person name="Sekine M."/>
            <person name="Baba S."/>
            <person name="Ankai A."/>
            <person name="Kosugi H."/>
            <person name="Hosoyama A."/>
            <person name="Fukui S."/>
            <person name="Nagai Y."/>
            <person name="Nishijima K."/>
            <person name="Nakazawa H."/>
            <person name="Takamiya M."/>
            <person name="Masuda S."/>
            <person name="Funahashi T."/>
            <person name="Tanaka T."/>
            <person name="Kudoh Y."/>
            <person name="Yamazaki J."/>
            <person name="Kushida N."/>
            <person name="Oguchi A."/>
            <person name="Aoki K."/>
            <person name="Kubota K."/>
            <person name="Nakamura Y."/>
            <person name="Nomura N."/>
            <person name="Sako Y."/>
            <person name="Kikuchi H."/>
        </authorList>
    </citation>
    <scope>NUCLEOTIDE SEQUENCE [LARGE SCALE GENOMIC DNA]</scope>
    <source>
        <strain evidence="6">ATCC 700893 / DSM 11879 / JCM 9820 / NBRC 100138 / K1</strain>
    </source>
</reference>
<reference key="2">
    <citation type="journal article" date="2005" name="FEBS Lett.">
        <title>Gene expression and characterization of two 2-oxoacid:ferredoxin oxidoreductases from Aeropyrum pernix K1.</title>
        <authorList>
            <person name="Nishizawa Y."/>
            <person name="Yabuki T."/>
            <person name="Fukuda E."/>
            <person name="Wakagi T."/>
        </authorList>
    </citation>
    <scope>FUNCTION</scope>
    <scope>CATALYTIC ACTIVITY</scope>
    <scope>BIOPHYSICOCHEMICAL PROPERTIES</scope>
    <scope>SUBUNIT</scope>
    <scope>SUBSTRATE SPECIFICITY</scope>
    <source>
        <strain>ATCC 700893 / DSM 11879 / JCM 9820 / NBRC 100138 / K1</strain>
    </source>
</reference>